<sequence>MSGKIKVTFIINDGEEKTVEAPIGLSILEIAHSNDLDLEGACEGSLACATCHVILEEEFYNKLKKPTEAEEDMLDLAFGLTDTSRLGCQIILTEELDGIKVHLPAATRNIKL</sequence>
<reference key="1">
    <citation type="journal article" date="2001" name="Mol. Biol. Evol.">
        <title>Pseudogenes, junk DNA, and the dynamics of Rickettsia genomes.</title>
        <authorList>
            <person name="Andersson J.O."/>
            <person name="Andersson S.G.E."/>
        </authorList>
    </citation>
    <scope>NUCLEOTIDE SEQUENCE [GENOMIC DNA]</scope>
    <source>
        <strain>84-21C</strain>
    </source>
</reference>
<protein>
    <recommendedName>
        <fullName>2Fe-2S ferredoxin</fullName>
    </recommendedName>
    <alternativeName>
        <fullName>Adrenodoxin-like protein</fullName>
    </alternativeName>
</protein>
<keyword id="KW-0001">2Fe-2S</keyword>
<keyword id="KW-0249">Electron transport</keyword>
<keyword id="KW-0408">Iron</keyword>
<keyword id="KW-0411">Iron-sulfur</keyword>
<keyword id="KW-0479">Metal-binding</keyword>
<keyword id="KW-0813">Transport</keyword>
<name>FER2_RICRI</name>
<comment type="function">
    <text>Ferredoxin are iron-sulfur proteins that transfer electrons in a wide variety of metabolic reactions.</text>
</comment>
<comment type="cofactor">
    <cofactor evidence="1">
        <name>[2Fe-2S] cluster</name>
        <dbReference type="ChEBI" id="CHEBI:190135"/>
    </cofactor>
    <text evidence="1">Binds 1 [2Fe-2S] cluster.</text>
</comment>
<comment type="similarity">
    <text evidence="3">Belongs to the adrenodoxin/putidaredoxin family.</text>
</comment>
<proteinExistence type="inferred from homology"/>
<accession>Q9AKH1</accession>
<feature type="chain" id="PRO_0000201178" description="2Fe-2S ferredoxin">
    <location>
        <begin position="1"/>
        <end position="112"/>
    </location>
</feature>
<feature type="domain" description="2Fe-2S ferredoxin-type" evidence="2">
    <location>
        <begin position="5"/>
        <end position="107"/>
    </location>
</feature>
<feature type="binding site" evidence="2">
    <location>
        <position position="42"/>
    </location>
    <ligand>
        <name>[2Fe-2S] cluster</name>
        <dbReference type="ChEBI" id="CHEBI:190135"/>
    </ligand>
</feature>
<feature type="binding site" evidence="2">
    <location>
        <position position="48"/>
    </location>
    <ligand>
        <name>[2Fe-2S] cluster</name>
        <dbReference type="ChEBI" id="CHEBI:190135"/>
    </ligand>
</feature>
<feature type="binding site" evidence="2">
    <location>
        <position position="51"/>
    </location>
    <ligand>
        <name>[2Fe-2S] cluster</name>
        <dbReference type="ChEBI" id="CHEBI:190135"/>
    </ligand>
</feature>
<feature type="binding site" evidence="2">
    <location>
        <position position="88"/>
    </location>
    <ligand>
        <name>[2Fe-2S] cluster</name>
        <dbReference type="ChEBI" id="CHEBI:190135"/>
    </ligand>
</feature>
<organism>
    <name type="scientific">Rickettsia rickettsii</name>
    <dbReference type="NCBI Taxonomy" id="783"/>
    <lineage>
        <taxon>Bacteria</taxon>
        <taxon>Pseudomonadati</taxon>
        <taxon>Pseudomonadota</taxon>
        <taxon>Alphaproteobacteria</taxon>
        <taxon>Rickettsiales</taxon>
        <taxon>Rickettsiaceae</taxon>
        <taxon>Rickettsieae</taxon>
        <taxon>Rickettsia</taxon>
        <taxon>spotted fever group</taxon>
    </lineage>
</organism>
<gene>
    <name type="primary">fdxB</name>
    <name type="synonym">adx1</name>
</gene>
<evidence type="ECO:0000250" key="1"/>
<evidence type="ECO:0000255" key="2">
    <source>
        <dbReference type="PROSITE-ProRule" id="PRU00465"/>
    </source>
</evidence>
<evidence type="ECO:0000305" key="3"/>
<dbReference type="EMBL" id="AJ293320">
    <property type="protein sequence ID" value="CAC33690.1"/>
    <property type="molecule type" value="Genomic_DNA"/>
</dbReference>
<dbReference type="RefSeq" id="WP_012150478.1">
    <property type="nucleotide sequence ID" value="NZ_CP114277.2"/>
</dbReference>
<dbReference type="SMR" id="Q9AKH1"/>
<dbReference type="OMA" id="TCHCIIR"/>
<dbReference type="GO" id="GO:0051537">
    <property type="term" value="F:2 iron, 2 sulfur cluster binding"/>
    <property type="evidence" value="ECO:0007669"/>
    <property type="project" value="UniProtKB-KW"/>
</dbReference>
<dbReference type="GO" id="GO:0009055">
    <property type="term" value="F:electron transfer activity"/>
    <property type="evidence" value="ECO:0007669"/>
    <property type="project" value="TreeGrafter"/>
</dbReference>
<dbReference type="GO" id="GO:0046872">
    <property type="term" value="F:metal ion binding"/>
    <property type="evidence" value="ECO:0007669"/>
    <property type="project" value="UniProtKB-KW"/>
</dbReference>
<dbReference type="GO" id="GO:0140647">
    <property type="term" value="P:P450-containing electron transport chain"/>
    <property type="evidence" value="ECO:0007669"/>
    <property type="project" value="InterPro"/>
</dbReference>
<dbReference type="CDD" id="cd00207">
    <property type="entry name" value="fer2"/>
    <property type="match status" value="1"/>
</dbReference>
<dbReference type="Gene3D" id="3.10.20.30">
    <property type="match status" value="1"/>
</dbReference>
<dbReference type="InterPro" id="IPR036010">
    <property type="entry name" value="2Fe-2S_ferredoxin-like_sf"/>
</dbReference>
<dbReference type="InterPro" id="IPR001041">
    <property type="entry name" value="2Fe-2S_ferredoxin-type"/>
</dbReference>
<dbReference type="InterPro" id="IPR001055">
    <property type="entry name" value="Adrenodoxin-like"/>
</dbReference>
<dbReference type="InterPro" id="IPR018298">
    <property type="entry name" value="Adrenodoxin_Fe-S_BS"/>
</dbReference>
<dbReference type="InterPro" id="IPR012675">
    <property type="entry name" value="Beta-grasp_dom_sf"/>
</dbReference>
<dbReference type="PANTHER" id="PTHR23426:SF72">
    <property type="entry name" value="2FE-2S FERREDOXIN-TYPE DOMAIN-CONTAINING PROTEIN"/>
    <property type="match status" value="1"/>
</dbReference>
<dbReference type="PANTHER" id="PTHR23426">
    <property type="entry name" value="FERREDOXIN/ADRENODOXIN"/>
    <property type="match status" value="1"/>
</dbReference>
<dbReference type="Pfam" id="PF00111">
    <property type="entry name" value="Fer2"/>
    <property type="match status" value="1"/>
</dbReference>
<dbReference type="PRINTS" id="PR00355">
    <property type="entry name" value="ADRENODOXIN"/>
</dbReference>
<dbReference type="SUPFAM" id="SSF54292">
    <property type="entry name" value="2Fe-2S ferredoxin-like"/>
    <property type="match status" value="1"/>
</dbReference>
<dbReference type="PROSITE" id="PS51085">
    <property type="entry name" value="2FE2S_FER_2"/>
    <property type="match status" value="1"/>
</dbReference>
<dbReference type="PROSITE" id="PS00814">
    <property type="entry name" value="ADX"/>
    <property type="match status" value="1"/>
</dbReference>